<accession>P20476</accession>
<accession>P87480</accession>
<accession>P87481</accession>
<organism>
    <name type="scientific">Craspedocephalus gramineus</name>
    <name type="common">Bamboo pit viper</name>
    <name type="synonym">Trimeresurus gramineus</name>
    <dbReference type="NCBI Taxonomy" id="8767"/>
    <lineage>
        <taxon>Eukaryota</taxon>
        <taxon>Metazoa</taxon>
        <taxon>Chordata</taxon>
        <taxon>Craniata</taxon>
        <taxon>Vertebrata</taxon>
        <taxon>Euteleostomi</taxon>
        <taxon>Lepidosauria</taxon>
        <taxon>Squamata</taxon>
        <taxon>Bifurcata</taxon>
        <taxon>Unidentata</taxon>
        <taxon>Episquamata</taxon>
        <taxon>Toxicofera</taxon>
        <taxon>Serpentes</taxon>
        <taxon>Colubroidea</taxon>
        <taxon>Viperidae</taxon>
        <taxon>Crotalinae</taxon>
        <taxon>Craspedocephalus</taxon>
    </lineage>
</organism>
<keyword id="KW-0106">Calcium</keyword>
<keyword id="KW-0903">Direct protein sequencing</keyword>
<keyword id="KW-1015">Disulfide bond</keyword>
<keyword id="KW-0378">Hydrolase</keyword>
<keyword id="KW-0442">Lipid degradation</keyword>
<keyword id="KW-0443">Lipid metabolism</keyword>
<keyword id="KW-0479">Metal-binding</keyword>
<keyword id="KW-0964">Secreted</keyword>
<keyword id="KW-0732">Signal</keyword>
<reference key="1">
    <citation type="journal article" date="1995" name="Proc. Natl. Acad. Sci. U.S.A.">
        <title>Accelerated evolution in the protein-coding regions is universal in crotalinae snake venom gland phospholipase A2 isozyme genes.</title>
        <authorList>
            <person name="Nakashima K."/>
            <person name="Nobuhisa I."/>
            <person name="Deshimaru M."/>
            <person name="Nakai M."/>
            <person name="Ogawa T."/>
            <person name="Shimohigashi Y."/>
            <person name="Fukumaki Y."/>
            <person name="Hattori M."/>
            <person name="Sakaki Y."/>
            <person name="Hattori S."/>
            <person name="Ohno M."/>
        </authorList>
    </citation>
    <scope>NUCLEOTIDE SEQUENCE [GENOMIC DNA / MRNA]</scope>
    <source>
        <tissue>Venom gland</tissue>
    </source>
</reference>
<reference key="2">
    <citation type="journal article" date="1991" name="Toxicon">
        <title>Amino acid sequence of a phospholipase A2 from the venom of Trimeresurus gramineus (green habu snake).</title>
        <authorList>
            <person name="Oda N."/>
            <person name="Nakamura H."/>
            <person name="Sakamoto S."/>
            <person name="Liu S.-Y."/>
            <person name="Kihara H."/>
            <person name="Chang C.-C."/>
            <person name="Ohno M."/>
        </authorList>
    </citation>
    <scope>PROTEIN SEQUENCE OF 17-138</scope>
    <source>
        <tissue>Venom</tissue>
    </source>
</reference>
<reference key="3">
    <citation type="journal article" date="1987" name="J. Biochem.">
        <title>Purification and characterization of phospholipase A2 from Trimeresurus gramineus venom.</title>
        <authorList>
            <person name="Oda N."/>
            <person name="Sakai H."/>
            <person name="Shieh T.C."/>
            <person name="Nakamura H."/>
            <person name="Sakamoto S."/>
            <person name="Kihara H."/>
            <person name="Chang C.-C."/>
            <person name="Ohno M."/>
        </authorList>
    </citation>
    <scope>PROTEIN SEQUENCE OF 17-54</scope>
    <source>
        <tissue>Venom</tissue>
    </source>
</reference>
<evidence type="ECO:0000250" key="1"/>
<evidence type="ECO:0000250" key="2">
    <source>
        <dbReference type="UniProtKB" id="O42187"/>
    </source>
</evidence>
<evidence type="ECO:0000250" key="3">
    <source>
        <dbReference type="UniProtKB" id="P06859"/>
    </source>
</evidence>
<evidence type="ECO:0000255" key="4">
    <source>
        <dbReference type="PROSITE-ProRule" id="PRU10035"/>
    </source>
</evidence>
<evidence type="ECO:0000255" key="5">
    <source>
        <dbReference type="PROSITE-ProRule" id="PRU10036"/>
    </source>
</evidence>
<evidence type="ECO:0000269" key="6">
    <source>
    </source>
</evidence>
<evidence type="ECO:0000269" key="7">
    <source>
    </source>
</evidence>
<evidence type="ECO:0000305" key="8"/>
<sequence>MRTLWIMAVLLVGVEGHLMQFETLIMKVAGRSGVWYYGSYGCFCGAGGQGRPQDASDRCCFVHDCCYGKVNGCDPKKDFYTYSEENGAIVCGGDDPCKKEICECDKDAAICFRDNKDTYDNKYWFFPAKNCQEESEPC</sequence>
<protein>
    <recommendedName>
        <fullName>Acidic phospholipase A2 1</fullName>
        <shortName>svPLA2</shortName>
        <ecNumber>3.1.1.4</ecNumber>
    </recommendedName>
    <alternativeName>
        <fullName>Phosphatidylcholine 2-acylhydrolase</fullName>
    </alternativeName>
    <alternativeName>
        <fullName>Phospholipase A2 isozyme I</fullName>
        <shortName>PLA2-I</shortName>
    </alternativeName>
</protein>
<comment type="function">
    <text>Snake venom phospholipase A2 (PLA2) that has high lipolytic activity. PLA2 catalyzes the calcium-dependent hydrolysis of the 2-acyl groups in 3-sn-phosphoglycerides.</text>
</comment>
<comment type="catalytic activity">
    <reaction evidence="4 5">
        <text>a 1,2-diacyl-sn-glycero-3-phosphocholine + H2O = a 1-acyl-sn-glycero-3-phosphocholine + a fatty acid + H(+)</text>
        <dbReference type="Rhea" id="RHEA:15801"/>
        <dbReference type="ChEBI" id="CHEBI:15377"/>
        <dbReference type="ChEBI" id="CHEBI:15378"/>
        <dbReference type="ChEBI" id="CHEBI:28868"/>
        <dbReference type="ChEBI" id="CHEBI:57643"/>
        <dbReference type="ChEBI" id="CHEBI:58168"/>
        <dbReference type="EC" id="3.1.1.4"/>
    </reaction>
</comment>
<comment type="cofactor">
    <cofactor evidence="1">
        <name>Ca(2+)</name>
        <dbReference type="ChEBI" id="CHEBI:29108"/>
    </cofactor>
    <text evidence="1">Binds 1 Ca(2+) ion.</text>
</comment>
<comment type="subcellular location">
    <subcellularLocation>
        <location>Secreted</location>
    </subcellularLocation>
</comment>
<comment type="tissue specificity">
    <text>Expressed by the venom gland.</text>
</comment>
<comment type="similarity">
    <text evidence="8">Belongs to the phospholipase A2 family. Group II subfamily. D49 sub-subfamily.</text>
</comment>
<comment type="sequence caution" evidence="8">
    <conflict type="erroneous initiation">
        <sequence resource="EMBL-CDS" id="BAA06552"/>
    </conflict>
    <text>Extended N-terminus.</text>
</comment>
<name>PA2A1_CRAGM</name>
<feature type="signal peptide" evidence="6 7">
    <location>
        <begin position="1"/>
        <end position="16"/>
    </location>
</feature>
<feature type="chain" id="PRO_0000022959" description="Acidic phospholipase A2 1">
    <location>
        <begin position="17"/>
        <end position="138"/>
    </location>
</feature>
<feature type="active site" evidence="3">
    <location>
        <position position="63"/>
    </location>
</feature>
<feature type="active site" evidence="3">
    <location>
        <position position="105"/>
    </location>
</feature>
<feature type="binding site" evidence="2">
    <location>
        <position position="43"/>
    </location>
    <ligand>
        <name>Ca(2+)</name>
        <dbReference type="ChEBI" id="CHEBI:29108"/>
    </ligand>
</feature>
<feature type="binding site" evidence="2">
    <location>
        <position position="45"/>
    </location>
    <ligand>
        <name>Ca(2+)</name>
        <dbReference type="ChEBI" id="CHEBI:29108"/>
    </ligand>
</feature>
<feature type="binding site" evidence="2">
    <location>
        <position position="47"/>
    </location>
    <ligand>
        <name>Ca(2+)</name>
        <dbReference type="ChEBI" id="CHEBI:29108"/>
    </ligand>
</feature>
<feature type="binding site" evidence="2">
    <location>
        <position position="64"/>
    </location>
    <ligand>
        <name>Ca(2+)</name>
        <dbReference type="ChEBI" id="CHEBI:29108"/>
    </ligand>
</feature>
<feature type="disulfide bond" evidence="2">
    <location>
        <begin position="42"/>
        <end position="131"/>
    </location>
</feature>
<feature type="disulfide bond" evidence="2">
    <location>
        <begin position="44"/>
        <end position="60"/>
    </location>
</feature>
<feature type="disulfide bond" evidence="2">
    <location>
        <begin position="59"/>
        <end position="111"/>
    </location>
</feature>
<feature type="disulfide bond" evidence="2">
    <location>
        <begin position="65"/>
        <end position="138"/>
    </location>
</feature>
<feature type="disulfide bond" evidence="2">
    <location>
        <begin position="66"/>
        <end position="104"/>
    </location>
</feature>
<feature type="disulfide bond" evidence="2">
    <location>
        <begin position="73"/>
        <end position="97"/>
    </location>
</feature>
<feature type="disulfide bond" evidence="2">
    <location>
        <begin position="91"/>
        <end position="102"/>
    </location>
</feature>
<dbReference type="EC" id="3.1.1.4"/>
<dbReference type="EMBL" id="D31774">
    <property type="protein sequence ID" value="BAA06552.1"/>
    <property type="status" value="ALT_INIT"/>
    <property type="molecule type" value="mRNA"/>
</dbReference>
<dbReference type="EMBL" id="D31780">
    <property type="protein sequence ID" value="BAA06558.1"/>
    <property type="molecule type" value="Genomic_DNA"/>
</dbReference>
<dbReference type="PIR" id="A39557">
    <property type="entry name" value="A39557"/>
</dbReference>
<dbReference type="SMR" id="P20476"/>
<dbReference type="GO" id="GO:0005576">
    <property type="term" value="C:extracellular region"/>
    <property type="evidence" value="ECO:0007669"/>
    <property type="project" value="UniProtKB-SubCell"/>
</dbReference>
<dbReference type="GO" id="GO:0005509">
    <property type="term" value="F:calcium ion binding"/>
    <property type="evidence" value="ECO:0007669"/>
    <property type="project" value="InterPro"/>
</dbReference>
<dbReference type="GO" id="GO:0047498">
    <property type="term" value="F:calcium-dependent phospholipase A2 activity"/>
    <property type="evidence" value="ECO:0007669"/>
    <property type="project" value="TreeGrafter"/>
</dbReference>
<dbReference type="GO" id="GO:0005543">
    <property type="term" value="F:phospholipid binding"/>
    <property type="evidence" value="ECO:0007669"/>
    <property type="project" value="TreeGrafter"/>
</dbReference>
<dbReference type="GO" id="GO:0050482">
    <property type="term" value="P:arachidonate secretion"/>
    <property type="evidence" value="ECO:0007669"/>
    <property type="project" value="InterPro"/>
</dbReference>
<dbReference type="GO" id="GO:0016042">
    <property type="term" value="P:lipid catabolic process"/>
    <property type="evidence" value="ECO:0007669"/>
    <property type="project" value="UniProtKB-KW"/>
</dbReference>
<dbReference type="GO" id="GO:0042130">
    <property type="term" value="P:negative regulation of T cell proliferation"/>
    <property type="evidence" value="ECO:0007669"/>
    <property type="project" value="TreeGrafter"/>
</dbReference>
<dbReference type="GO" id="GO:0006644">
    <property type="term" value="P:phospholipid metabolic process"/>
    <property type="evidence" value="ECO:0007669"/>
    <property type="project" value="InterPro"/>
</dbReference>
<dbReference type="CDD" id="cd00125">
    <property type="entry name" value="PLA2c"/>
    <property type="match status" value="1"/>
</dbReference>
<dbReference type="FunFam" id="1.20.90.10:FF:000001">
    <property type="entry name" value="Basic phospholipase A2 homolog"/>
    <property type="match status" value="1"/>
</dbReference>
<dbReference type="Gene3D" id="1.20.90.10">
    <property type="entry name" value="Phospholipase A2 domain"/>
    <property type="match status" value="1"/>
</dbReference>
<dbReference type="InterPro" id="IPR001211">
    <property type="entry name" value="PLipase_A2"/>
</dbReference>
<dbReference type="InterPro" id="IPR033112">
    <property type="entry name" value="PLipase_A2_Asp_AS"/>
</dbReference>
<dbReference type="InterPro" id="IPR016090">
    <property type="entry name" value="PLipase_A2_dom"/>
</dbReference>
<dbReference type="InterPro" id="IPR036444">
    <property type="entry name" value="PLipase_A2_dom_sf"/>
</dbReference>
<dbReference type="InterPro" id="IPR033113">
    <property type="entry name" value="PLipase_A2_His_AS"/>
</dbReference>
<dbReference type="PANTHER" id="PTHR11716">
    <property type="entry name" value="PHOSPHOLIPASE A2 FAMILY MEMBER"/>
    <property type="match status" value="1"/>
</dbReference>
<dbReference type="PANTHER" id="PTHR11716:SF9">
    <property type="entry name" value="PHOSPHOLIPASE A2, MEMBRANE ASSOCIATED"/>
    <property type="match status" value="1"/>
</dbReference>
<dbReference type="Pfam" id="PF00068">
    <property type="entry name" value="Phospholip_A2_1"/>
    <property type="match status" value="1"/>
</dbReference>
<dbReference type="PRINTS" id="PR00389">
    <property type="entry name" value="PHPHLIPASEA2"/>
</dbReference>
<dbReference type="SMART" id="SM00085">
    <property type="entry name" value="PA2c"/>
    <property type="match status" value="1"/>
</dbReference>
<dbReference type="SUPFAM" id="SSF48619">
    <property type="entry name" value="Phospholipase A2, PLA2"/>
    <property type="match status" value="1"/>
</dbReference>
<dbReference type="PROSITE" id="PS00119">
    <property type="entry name" value="PA2_ASP"/>
    <property type="match status" value="1"/>
</dbReference>
<dbReference type="PROSITE" id="PS00118">
    <property type="entry name" value="PA2_HIS"/>
    <property type="match status" value="1"/>
</dbReference>
<proteinExistence type="evidence at protein level"/>